<comment type="catalytic activity">
    <reaction>
        <text>Preferential cleavage: Arg-|-Xaa, Lys-|-Xaa.</text>
        <dbReference type="EC" id="3.4.21.4"/>
    </reaction>
</comment>
<comment type="subcellular location">
    <subcellularLocation>
        <location>Secreted</location>
        <location>Extracellular space</location>
    </subcellularLocation>
</comment>
<comment type="similarity">
    <text evidence="2">Belongs to the peptidase S1 family.</text>
</comment>
<protein>
    <recommendedName>
        <fullName>Trypsin zeta</fullName>
        <ecNumber>3.4.21.4</ecNumber>
    </recommendedName>
</protein>
<proteinExistence type="evidence at transcript level"/>
<reference key="1">
    <citation type="journal article" date="1999" name="Mol. Biol. Evol.">
        <title>Concerted evolution within a trypsin gene cluster in Drosophila.</title>
        <authorList>
            <person name="Wang S."/>
            <person name="Magoulas C."/>
            <person name="Hickey D.A."/>
        </authorList>
    </citation>
    <scope>NUCLEOTIDE SEQUENCE [GENOMIC DNA]</scope>
    <source>
        <strain>Oregon-R</strain>
    </source>
</reference>
<reference key="2">
    <citation type="journal article" date="2000" name="Science">
        <title>The genome sequence of Drosophila melanogaster.</title>
        <authorList>
            <person name="Adams M.D."/>
            <person name="Celniker S.E."/>
            <person name="Holt R.A."/>
            <person name="Evans C.A."/>
            <person name="Gocayne J.D."/>
            <person name="Amanatides P.G."/>
            <person name="Scherer S.E."/>
            <person name="Li P.W."/>
            <person name="Hoskins R.A."/>
            <person name="Galle R.F."/>
            <person name="George R.A."/>
            <person name="Lewis S.E."/>
            <person name="Richards S."/>
            <person name="Ashburner M."/>
            <person name="Henderson S.N."/>
            <person name="Sutton G.G."/>
            <person name="Wortman J.R."/>
            <person name="Yandell M.D."/>
            <person name="Zhang Q."/>
            <person name="Chen L.X."/>
            <person name="Brandon R.C."/>
            <person name="Rogers Y.-H.C."/>
            <person name="Blazej R.G."/>
            <person name="Champe M."/>
            <person name="Pfeiffer B.D."/>
            <person name="Wan K.H."/>
            <person name="Doyle C."/>
            <person name="Baxter E.G."/>
            <person name="Helt G."/>
            <person name="Nelson C.R."/>
            <person name="Miklos G.L.G."/>
            <person name="Abril J.F."/>
            <person name="Agbayani A."/>
            <person name="An H.-J."/>
            <person name="Andrews-Pfannkoch C."/>
            <person name="Baldwin D."/>
            <person name="Ballew R.M."/>
            <person name="Basu A."/>
            <person name="Baxendale J."/>
            <person name="Bayraktaroglu L."/>
            <person name="Beasley E.M."/>
            <person name="Beeson K.Y."/>
            <person name="Benos P.V."/>
            <person name="Berman B.P."/>
            <person name="Bhandari D."/>
            <person name="Bolshakov S."/>
            <person name="Borkova D."/>
            <person name="Botchan M.R."/>
            <person name="Bouck J."/>
            <person name="Brokstein P."/>
            <person name="Brottier P."/>
            <person name="Burtis K.C."/>
            <person name="Busam D.A."/>
            <person name="Butler H."/>
            <person name="Cadieu E."/>
            <person name="Center A."/>
            <person name="Chandra I."/>
            <person name="Cherry J.M."/>
            <person name="Cawley S."/>
            <person name="Dahlke C."/>
            <person name="Davenport L.B."/>
            <person name="Davies P."/>
            <person name="de Pablos B."/>
            <person name="Delcher A."/>
            <person name="Deng Z."/>
            <person name="Mays A.D."/>
            <person name="Dew I."/>
            <person name="Dietz S.M."/>
            <person name="Dodson K."/>
            <person name="Doup L.E."/>
            <person name="Downes M."/>
            <person name="Dugan-Rocha S."/>
            <person name="Dunkov B.C."/>
            <person name="Dunn P."/>
            <person name="Durbin K.J."/>
            <person name="Evangelista C.C."/>
            <person name="Ferraz C."/>
            <person name="Ferriera S."/>
            <person name="Fleischmann W."/>
            <person name="Fosler C."/>
            <person name="Gabrielian A.E."/>
            <person name="Garg N.S."/>
            <person name="Gelbart W.M."/>
            <person name="Glasser K."/>
            <person name="Glodek A."/>
            <person name="Gong F."/>
            <person name="Gorrell J.H."/>
            <person name="Gu Z."/>
            <person name="Guan P."/>
            <person name="Harris M."/>
            <person name="Harris N.L."/>
            <person name="Harvey D.A."/>
            <person name="Heiman T.J."/>
            <person name="Hernandez J.R."/>
            <person name="Houck J."/>
            <person name="Hostin D."/>
            <person name="Houston K.A."/>
            <person name="Howland T.J."/>
            <person name="Wei M.-H."/>
            <person name="Ibegwam C."/>
            <person name="Jalali M."/>
            <person name="Kalush F."/>
            <person name="Karpen G.H."/>
            <person name="Ke Z."/>
            <person name="Kennison J.A."/>
            <person name="Ketchum K.A."/>
            <person name="Kimmel B.E."/>
            <person name="Kodira C.D."/>
            <person name="Kraft C.L."/>
            <person name="Kravitz S."/>
            <person name="Kulp D."/>
            <person name="Lai Z."/>
            <person name="Lasko P."/>
            <person name="Lei Y."/>
            <person name="Levitsky A.A."/>
            <person name="Li J.H."/>
            <person name="Li Z."/>
            <person name="Liang Y."/>
            <person name="Lin X."/>
            <person name="Liu X."/>
            <person name="Mattei B."/>
            <person name="McIntosh T.C."/>
            <person name="McLeod M.P."/>
            <person name="McPherson D."/>
            <person name="Merkulov G."/>
            <person name="Milshina N.V."/>
            <person name="Mobarry C."/>
            <person name="Morris J."/>
            <person name="Moshrefi A."/>
            <person name="Mount S.M."/>
            <person name="Moy M."/>
            <person name="Murphy B."/>
            <person name="Murphy L."/>
            <person name="Muzny D.M."/>
            <person name="Nelson D.L."/>
            <person name="Nelson D.R."/>
            <person name="Nelson K.A."/>
            <person name="Nixon K."/>
            <person name="Nusskern D.R."/>
            <person name="Pacleb J.M."/>
            <person name="Palazzolo M."/>
            <person name="Pittman G.S."/>
            <person name="Pan S."/>
            <person name="Pollard J."/>
            <person name="Puri V."/>
            <person name="Reese M.G."/>
            <person name="Reinert K."/>
            <person name="Remington K."/>
            <person name="Saunders R.D.C."/>
            <person name="Scheeler F."/>
            <person name="Shen H."/>
            <person name="Shue B.C."/>
            <person name="Siden-Kiamos I."/>
            <person name="Simpson M."/>
            <person name="Skupski M.P."/>
            <person name="Smith T.J."/>
            <person name="Spier E."/>
            <person name="Spradling A.C."/>
            <person name="Stapleton M."/>
            <person name="Strong R."/>
            <person name="Sun E."/>
            <person name="Svirskas R."/>
            <person name="Tector C."/>
            <person name="Turner R."/>
            <person name="Venter E."/>
            <person name="Wang A.H."/>
            <person name="Wang X."/>
            <person name="Wang Z.-Y."/>
            <person name="Wassarman D.A."/>
            <person name="Weinstock G.M."/>
            <person name="Weissenbach J."/>
            <person name="Williams S.M."/>
            <person name="Woodage T."/>
            <person name="Worley K.C."/>
            <person name="Wu D."/>
            <person name="Yang S."/>
            <person name="Yao Q.A."/>
            <person name="Ye J."/>
            <person name="Yeh R.-F."/>
            <person name="Zaveri J.S."/>
            <person name="Zhan M."/>
            <person name="Zhang G."/>
            <person name="Zhao Q."/>
            <person name="Zheng L."/>
            <person name="Zheng X.H."/>
            <person name="Zhong F.N."/>
            <person name="Zhong W."/>
            <person name="Zhou X."/>
            <person name="Zhu S.C."/>
            <person name="Zhu X."/>
            <person name="Smith H.O."/>
            <person name="Gibbs R.A."/>
            <person name="Myers E.W."/>
            <person name="Rubin G.M."/>
            <person name="Venter J.C."/>
        </authorList>
    </citation>
    <scope>NUCLEOTIDE SEQUENCE [LARGE SCALE GENOMIC DNA]</scope>
    <source>
        <strain>Berkeley</strain>
    </source>
</reference>
<reference key="3">
    <citation type="journal article" date="2002" name="Genome Biol.">
        <title>Annotation of the Drosophila melanogaster euchromatic genome: a systematic review.</title>
        <authorList>
            <person name="Misra S."/>
            <person name="Crosby M.A."/>
            <person name="Mungall C.J."/>
            <person name="Matthews B.B."/>
            <person name="Campbell K.S."/>
            <person name="Hradecky P."/>
            <person name="Huang Y."/>
            <person name="Kaminker J.S."/>
            <person name="Millburn G.H."/>
            <person name="Prochnik S.E."/>
            <person name="Smith C.D."/>
            <person name="Tupy J.L."/>
            <person name="Whitfield E.J."/>
            <person name="Bayraktaroglu L."/>
            <person name="Berman B.P."/>
            <person name="Bettencourt B.R."/>
            <person name="Celniker S.E."/>
            <person name="de Grey A.D.N.J."/>
            <person name="Drysdale R.A."/>
            <person name="Harris N.L."/>
            <person name="Richter J."/>
            <person name="Russo S."/>
            <person name="Schroeder A.J."/>
            <person name="Shu S.Q."/>
            <person name="Stapleton M."/>
            <person name="Yamada C."/>
            <person name="Ashburner M."/>
            <person name="Gelbart W.M."/>
            <person name="Rubin G.M."/>
            <person name="Lewis S.E."/>
        </authorList>
    </citation>
    <scope>GENOME REANNOTATION</scope>
    <source>
        <strain>Berkeley</strain>
    </source>
</reference>
<reference key="4">
    <citation type="journal article" date="2002" name="Genome Biol.">
        <title>A Drosophila full-length cDNA resource.</title>
        <authorList>
            <person name="Stapleton M."/>
            <person name="Carlson J.W."/>
            <person name="Brokstein P."/>
            <person name="Yu C."/>
            <person name="Champe M."/>
            <person name="George R.A."/>
            <person name="Guarin H."/>
            <person name="Kronmiller B."/>
            <person name="Pacleb J.M."/>
            <person name="Park S."/>
            <person name="Wan K.H."/>
            <person name="Rubin G.M."/>
            <person name="Celniker S.E."/>
        </authorList>
    </citation>
    <scope>NUCLEOTIDE SEQUENCE [LARGE SCALE MRNA]</scope>
    <source>
        <strain>Berkeley</strain>
        <tissue>Embryo</tissue>
    </source>
</reference>
<keyword id="KW-1015">Disulfide bond</keyword>
<keyword id="KW-0378">Hydrolase</keyword>
<keyword id="KW-0645">Protease</keyword>
<keyword id="KW-1185">Reference proteome</keyword>
<keyword id="KW-0964">Secreted</keyword>
<keyword id="KW-0720">Serine protease</keyword>
<keyword id="KW-0732">Signal</keyword>
<keyword id="KW-0865">Zymogen</keyword>
<feature type="signal peptide" evidence="3">
    <location>
        <begin position="1"/>
        <end position="22"/>
    </location>
</feature>
<feature type="propeptide" id="PRO_0000028287" description="Activation peptide">
    <location>
        <begin position="23"/>
        <end position="38"/>
    </location>
</feature>
<feature type="chain" id="PRO_0000028288" description="Trypsin zeta">
    <location>
        <begin position="39"/>
        <end position="280"/>
    </location>
</feature>
<feature type="domain" description="Peptidase S1" evidence="2">
    <location>
        <begin position="39"/>
        <end position="278"/>
    </location>
</feature>
<feature type="active site" description="Charge relay system" evidence="1">
    <location>
        <position position="87"/>
    </location>
</feature>
<feature type="active site" description="Charge relay system" evidence="1">
    <location>
        <position position="134"/>
    </location>
</feature>
<feature type="active site" description="Charge relay system" evidence="1">
    <location>
        <position position="234"/>
    </location>
</feature>
<feature type="site" description="Required for specificity" evidence="1">
    <location>
        <position position="228"/>
    </location>
</feature>
<feature type="disulfide bond" evidence="2">
    <location>
        <begin position="72"/>
        <end position="88"/>
    </location>
</feature>
<feature type="disulfide bond" evidence="2">
    <location>
        <begin position="198"/>
        <end position="218"/>
    </location>
</feature>
<feature type="disulfide bond" evidence="2">
    <location>
        <begin position="230"/>
        <end position="254"/>
    </location>
</feature>
<feature type="sequence conflict" description="In Ref. 1; AAA17456." evidence="3" ref="1">
    <original>A</original>
    <variation>G</variation>
    <location>
        <position position="86"/>
    </location>
</feature>
<feature type="sequence conflict" description="In Ref. 1; AAA17456." evidence="3" ref="1">
    <original>P</original>
    <variation>A</variation>
    <location>
        <position position="145"/>
    </location>
</feature>
<feature type="sequence conflict" description="In Ref. 1; AAA17456." evidence="3" ref="1">
    <original>A</original>
    <variation>G</variation>
    <location>
        <position position="153"/>
    </location>
</feature>
<feature type="sequence conflict" description="In Ref. 1; AAA17456." evidence="3" ref="1">
    <original>L</original>
    <variation>S</variation>
    <location>
        <position position="158"/>
    </location>
</feature>
<feature type="sequence conflict" description="In Ref. 1; AAA17456." evidence="3" ref="1">
    <original>R</original>
    <variation>P</variation>
    <location>
        <position position="222"/>
    </location>
</feature>
<dbReference type="EC" id="3.4.21.4"/>
<dbReference type="EMBL" id="U04853">
    <property type="protein sequence ID" value="AAA17456.1"/>
    <property type="molecule type" value="Genomic_DNA"/>
</dbReference>
<dbReference type="EMBL" id="AE013599">
    <property type="protein sequence ID" value="AAF58663.1"/>
    <property type="molecule type" value="Genomic_DNA"/>
</dbReference>
<dbReference type="EMBL" id="AY113523">
    <property type="protein sequence ID" value="AAM29528.1"/>
    <property type="molecule type" value="mRNA"/>
</dbReference>
<dbReference type="RefSeq" id="NP_523691.1">
    <property type="nucleotide sequence ID" value="NM_078967.4"/>
</dbReference>
<dbReference type="SMR" id="P42280"/>
<dbReference type="BioGRID" id="62009">
    <property type="interactions" value="4"/>
</dbReference>
<dbReference type="FunCoup" id="P42280">
    <property type="interactions" value="66"/>
</dbReference>
<dbReference type="IntAct" id="P42280">
    <property type="interactions" value="4"/>
</dbReference>
<dbReference type="STRING" id="7227.FBpp0087260"/>
<dbReference type="MEROPS" id="S01.116"/>
<dbReference type="PaxDb" id="7227-FBpp0087260"/>
<dbReference type="DNASU" id="36216"/>
<dbReference type="EnsemblMetazoa" id="FBtr0088164">
    <property type="protein sequence ID" value="FBpp0087260"/>
    <property type="gene ID" value="FBgn0011556"/>
</dbReference>
<dbReference type="GeneID" id="36216"/>
<dbReference type="KEGG" id="dme:Dmel_CG12387"/>
<dbReference type="UCSC" id="CG12387-RA">
    <property type="organism name" value="d. melanogaster"/>
</dbReference>
<dbReference type="AGR" id="FB:FBgn0011556"/>
<dbReference type="CTD" id="36216"/>
<dbReference type="FlyBase" id="FBgn0011556">
    <property type="gene designation" value="zetaTry"/>
</dbReference>
<dbReference type="VEuPathDB" id="VectorBase:FBgn0011556"/>
<dbReference type="eggNOG" id="KOG3627">
    <property type="taxonomic scope" value="Eukaryota"/>
</dbReference>
<dbReference type="GeneTree" id="ENSGT00940000164166"/>
<dbReference type="HOGENOM" id="CLU_006842_7_1_1"/>
<dbReference type="InParanoid" id="P42280"/>
<dbReference type="OMA" id="CDQDYED"/>
<dbReference type="OrthoDB" id="10059102at2759"/>
<dbReference type="PhylomeDB" id="P42280"/>
<dbReference type="BioGRID-ORCS" id="36216">
    <property type="hits" value="0 hits in 1 CRISPR screen"/>
</dbReference>
<dbReference type="GenomeRNAi" id="36216"/>
<dbReference type="PRO" id="PR:P42280"/>
<dbReference type="Proteomes" id="UP000000803">
    <property type="component" value="Chromosome 2R"/>
</dbReference>
<dbReference type="Bgee" id="FBgn0011556">
    <property type="expression patterns" value="Expressed in adult hindgut (Drosophila) and 15 other cell types or tissues"/>
</dbReference>
<dbReference type="GO" id="GO:0005576">
    <property type="term" value="C:extracellular region"/>
    <property type="evidence" value="ECO:0007669"/>
    <property type="project" value="UniProtKB-SubCell"/>
</dbReference>
<dbReference type="GO" id="GO:0017171">
    <property type="term" value="F:serine hydrolase activity"/>
    <property type="evidence" value="ECO:0007005"/>
    <property type="project" value="FlyBase"/>
</dbReference>
<dbReference type="GO" id="GO:0004252">
    <property type="term" value="F:serine-type endopeptidase activity"/>
    <property type="evidence" value="ECO:0000255"/>
    <property type="project" value="FlyBase"/>
</dbReference>
<dbReference type="GO" id="GO:0006508">
    <property type="term" value="P:proteolysis"/>
    <property type="evidence" value="ECO:0000255"/>
    <property type="project" value="FlyBase"/>
</dbReference>
<dbReference type="CDD" id="cd00190">
    <property type="entry name" value="Tryp_SPc"/>
    <property type="match status" value="1"/>
</dbReference>
<dbReference type="FunFam" id="2.40.10.10:FF:000047">
    <property type="entry name" value="Trypsin eta"/>
    <property type="match status" value="1"/>
</dbReference>
<dbReference type="Gene3D" id="2.40.10.10">
    <property type="entry name" value="Trypsin-like serine proteases"/>
    <property type="match status" value="1"/>
</dbReference>
<dbReference type="InterPro" id="IPR050430">
    <property type="entry name" value="Peptidase_S1"/>
</dbReference>
<dbReference type="InterPro" id="IPR009003">
    <property type="entry name" value="Peptidase_S1_PA"/>
</dbReference>
<dbReference type="InterPro" id="IPR043504">
    <property type="entry name" value="Peptidase_S1_PA_chymotrypsin"/>
</dbReference>
<dbReference type="InterPro" id="IPR001314">
    <property type="entry name" value="Peptidase_S1A"/>
</dbReference>
<dbReference type="InterPro" id="IPR001254">
    <property type="entry name" value="Trypsin_dom"/>
</dbReference>
<dbReference type="InterPro" id="IPR018114">
    <property type="entry name" value="TRYPSIN_HIS"/>
</dbReference>
<dbReference type="InterPro" id="IPR033116">
    <property type="entry name" value="TRYPSIN_SER"/>
</dbReference>
<dbReference type="PANTHER" id="PTHR24276:SF91">
    <property type="entry name" value="AT26814P-RELATED"/>
    <property type="match status" value="1"/>
</dbReference>
<dbReference type="PANTHER" id="PTHR24276">
    <property type="entry name" value="POLYSERASE-RELATED"/>
    <property type="match status" value="1"/>
</dbReference>
<dbReference type="Pfam" id="PF00089">
    <property type="entry name" value="Trypsin"/>
    <property type="match status" value="1"/>
</dbReference>
<dbReference type="PRINTS" id="PR00722">
    <property type="entry name" value="CHYMOTRYPSIN"/>
</dbReference>
<dbReference type="SMART" id="SM00020">
    <property type="entry name" value="Tryp_SPc"/>
    <property type="match status" value="1"/>
</dbReference>
<dbReference type="SUPFAM" id="SSF50494">
    <property type="entry name" value="Trypsin-like serine proteases"/>
    <property type="match status" value="1"/>
</dbReference>
<dbReference type="PROSITE" id="PS50240">
    <property type="entry name" value="TRYPSIN_DOM"/>
    <property type="match status" value="1"/>
</dbReference>
<dbReference type="PROSITE" id="PS00134">
    <property type="entry name" value="TRYPSIN_HIS"/>
    <property type="match status" value="1"/>
</dbReference>
<dbReference type="PROSITE" id="PS00135">
    <property type="entry name" value="TRYPSIN_SER"/>
    <property type="match status" value="1"/>
</dbReference>
<organism>
    <name type="scientific">Drosophila melanogaster</name>
    <name type="common">Fruit fly</name>
    <dbReference type="NCBI Taxonomy" id="7227"/>
    <lineage>
        <taxon>Eukaryota</taxon>
        <taxon>Metazoa</taxon>
        <taxon>Ecdysozoa</taxon>
        <taxon>Arthropoda</taxon>
        <taxon>Hexapoda</taxon>
        <taxon>Insecta</taxon>
        <taxon>Pterygota</taxon>
        <taxon>Neoptera</taxon>
        <taxon>Endopterygota</taxon>
        <taxon>Diptera</taxon>
        <taxon>Brachycera</taxon>
        <taxon>Muscomorpha</taxon>
        <taxon>Ephydroidea</taxon>
        <taxon>Drosophilidae</taxon>
        <taxon>Drosophila</taxon>
        <taxon>Sophophora</taxon>
    </lineage>
</organism>
<gene>
    <name type="primary">zetaTry</name>
    <name type="ORF">CG12387</name>
</gene>
<evidence type="ECO:0000250" key="1"/>
<evidence type="ECO:0000255" key="2">
    <source>
        <dbReference type="PROSITE-ProRule" id="PRU00274"/>
    </source>
</evidence>
<evidence type="ECO:0000305" key="3"/>
<name>TRYZ_DROME</name>
<sequence length="280" mass="29738">MSSSWIVGLLAFLVSLVALTQGLPLLEDLDEKSVPDGRIVGGYATDIAQVPYQISLRYKGITTPENPFRHRCGGSIFNETTIVTAAHCVIGTVASQYKVVAGTNFQTGSDGVITNVKEIVMHEGYYSGAAYNNDIAILFVDPPLPLNNFTIKAIKLALEQPIEGTVSKVSGWGTTSPGGYSSNQLLAVDVPIVSNELCDQDYEDFGDETYRITSAMLCAGKRGVGGADACQGDSGGPLAVRDELYGVVSWGNSCALPNYPGVYANVAYLRPWIDAVLAGL</sequence>
<accession>P42280</accession>
<accession>Q9V5X8</accession>